<sequence length="302" mass="33764">MSVIAADRKPASDRKPVSDRKLARAAASSDRRFAAISHALLILWSVIVIVPMLWVLMSSFKSTGEILSSPFSLPDHWRFENYANAWTDANIGKYFLNSVIVVVSALILVMLLGAMCAYVLARFEFPGRRLIYYVMLAGLTFPVFLAIVPLFFQLQNFGLLNTRPGLILTYVAFALPFTMFFLYSFFRSLPHDVYEAALIDGAGDWRAFFQVMLPMARPGMAAVAIFNFLGLWNQFLLPVALNTDQDKWVLTQGMAAYASSQVYDIDYGALFAAIVVTVVPVLLVYCVFQRRIAGSVSQGTFR</sequence>
<evidence type="ECO:0000255" key="1"/>
<evidence type="ECO:0000255" key="2">
    <source>
        <dbReference type="PROSITE-ProRule" id="PRU00441"/>
    </source>
</evidence>
<evidence type="ECO:0000269" key="3">
    <source>
    </source>
</evidence>
<evidence type="ECO:0000303" key="4">
    <source>
    </source>
</evidence>
<evidence type="ECO:0000305" key="5"/>
<evidence type="ECO:0000305" key="6">
    <source>
    </source>
</evidence>
<evidence type="ECO:0000312" key="7">
    <source>
        <dbReference type="EMBL" id="CAA15784.1"/>
    </source>
</evidence>
<gene>
    <name evidence="4" type="primary">ngcG</name>
    <name evidence="7" type="ordered locus">SCO6007</name>
</gene>
<name>NGCG_STRCO</name>
<comment type="function">
    <text evidence="6">Part of the ABC transporter complex NgcEFG-MsiK involved in N,N'-diacetylchitobiose ((GlcNAc)2) uptake. Responsible for the translocation of the substrate across the membrane.</text>
</comment>
<comment type="subunit">
    <text evidence="6">The complex is composed of two ATP-binding proteins (MsiK), two transmembrane proteins (NgcF and NgcG) and a solute-binding protein (NgcE).</text>
</comment>
<comment type="subcellular location">
    <subcellularLocation>
        <location evidence="5">Cell membrane</location>
        <topology evidence="1">Multi-pass membrane protein</topology>
    </subcellularLocation>
</comment>
<comment type="induction">
    <text evidence="3">Constitutively expressed. Slightly induced by GlcNAc, (GlcNAc)2 and chitin. Repressed by DasR.</text>
</comment>
<comment type="similarity">
    <text evidence="5">Belongs to the binding-protein-dependent transport system permease family.</text>
</comment>
<organism>
    <name type="scientific">Streptomyces coelicolor (strain ATCC BAA-471 / A3(2) / M145)</name>
    <dbReference type="NCBI Taxonomy" id="100226"/>
    <lineage>
        <taxon>Bacteria</taxon>
        <taxon>Bacillati</taxon>
        <taxon>Actinomycetota</taxon>
        <taxon>Actinomycetes</taxon>
        <taxon>Kitasatosporales</taxon>
        <taxon>Streptomycetaceae</taxon>
        <taxon>Streptomyces</taxon>
        <taxon>Streptomyces albidoflavus group</taxon>
    </lineage>
</organism>
<protein>
    <recommendedName>
        <fullName evidence="5">Diacetylchitobiose uptake system permease protein NgcG</fullName>
    </recommendedName>
</protein>
<feature type="chain" id="PRO_0000447877" description="Diacetylchitobiose uptake system permease protein NgcG">
    <location>
        <begin position="1"/>
        <end position="302"/>
    </location>
</feature>
<feature type="transmembrane region" description="Helical" evidence="1">
    <location>
        <begin position="40"/>
        <end position="60"/>
    </location>
</feature>
<feature type="transmembrane region" description="Helical" evidence="1">
    <location>
        <begin position="99"/>
        <end position="119"/>
    </location>
</feature>
<feature type="transmembrane region" description="Helical" evidence="1">
    <location>
        <begin position="131"/>
        <end position="151"/>
    </location>
</feature>
<feature type="transmembrane region" description="Helical" evidence="1">
    <location>
        <begin position="166"/>
        <end position="186"/>
    </location>
</feature>
<feature type="transmembrane region" description="Helical" evidence="1">
    <location>
        <begin position="221"/>
        <end position="241"/>
    </location>
</feature>
<feature type="transmembrane region" description="Helical" evidence="1">
    <location>
        <begin position="268"/>
        <end position="288"/>
    </location>
</feature>
<feature type="domain" description="ABC transmembrane type-1" evidence="2">
    <location>
        <begin position="95"/>
        <end position="288"/>
    </location>
</feature>
<dbReference type="EMBL" id="AL939126">
    <property type="protein sequence ID" value="CAA15784.1"/>
    <property type="molecule type" value="Genomic_DNA"/>
</dbReference>
<dbReference type="PIR" id="T35672">
    <property type="entry name" value="T35672"/>
</dbReference>
<dbReference type="RefSeq" id="NP_630121.1">
    <property type="nucleotide sequence ID" value="NC_003888.3"/>
</dbReference>
<dbReference type="RefSeq" id="WP_011030593.1">
    <property type="nucleotide sequence ID" value="NZ_VNID01000007.1"/>
</dbReference>
<dbReference type="SMR" id="O50501"/>
<dbReference type="STRING" id="100226.gene:17763667"/>
<dbReference type="PaxDb" id="100226-SCO6007"/>
<dbReference type="KEGG" id="sco:SCO6007"/>
<dbReference type="PATRIC" id="fig|100226.15.peg.6105"/>
<dbReference type="eggNOG" id="COG0395">
    <property type="taxonomic scope" value="Bacteria"/>
</dbReference>
<dbReference type="HOGENOM" id="CLU_016047_1_2_11"/>
<dbReference type="InParanoid" id="O50501"/>
<dbReference type="OrthoDB" id="61122at2"/>
<dbReference type="PhylomeDB" id="O50501"/>
<dbReference type="Proteomes" id="UP000001973">
    <property type="component" value="Chromosome"/>
</dbReference>
<dbReference type="GO" id="GO:0005886">
    <property type="term" value="C:plasma membrane"/>
    <property type="evidence" value="ECO:0007669"/>
    <property type="project" value="UniProtKB-SubCell"/>
</dbReference>
<dbReference type="GO" id="GO:0055085">
    <property type="term" value="P:transmembrane transport"/>
    <property type="evidence" value="ECO:0007669"/>
    <property type="project" value="InterPro"/>
</dbReference>
<dbReference type="CDD" id="cd06261">
    <property type="entry name" value="TM_PBP2"/>
    <property type="match status" value="1"/>
</dbReference>
<dbReference type="Gene3D" id="1.10.3720.10">
    <property type="entry name" value="MetI-like"/>
    <property type="match status" value="1"/>
</dbReference>
<dbReference type="InterPro" id="IPR000515">
    <property type="entry name" value="MetI-like"/>
</dbReference>
<dbReference type="InterPro" id="IPR035906">
    <property type="entry name" value="MetI-like_sf"/>
</dbReference>
<dbReference type="PANTHER" id="PTHR43744">
    <property type="entry name" value="ABC TRANSPORTER PERMEASE PROTEIN MG189-RELATED-RELATED"/>
    <property type="match status" value="1"/>
</dbReference>
<dbReference type="PANTHER" id="PTHR43744:SF8">
    <property type="entry name" value="SN-GLYCEROL-3-PHOSPHATE TRANSPORT SYSTEM PERMEASE PROTEIN UGPE"/>
    <property type="match status" value="1"/>
</dbReference>
<dbReference type="Pfam" id="PF00528">
    <property type="entry name" value="BPD_transp_1"/>
    <property type="match status" value="1"/>
</dbReference>
<dbReference type="SUPFAM" id="SSF161098">
    <property type="entry name" value="MetI-like"/>
    <property type="match status" value="1"/>
</dbReference>
<dbReference type="PROSITE" id="PS50928">
    <property type="entry name" value="ABC_TM1"/>
    <property type="match status" value="1"/>
</dbReference>
<accession>O50501</accession>
<reference key="1">
    <citation type="journal article" date="2002" name="Nature">
        <title>Complete genome sequence of the model actinomycete Streptomyces coelicolor A3(2).</title>
        <authorList>
            <person name="Bentley S.D."/>
            <person name="Chater K.F."/>
            <person name="Cerdeno-Tarraga A.-M."/>
            <person name="Challis G.L."/>
            <person name="Thomson N.R."/>
            <person name="James K.D."/>
            <person name="Harris D.E."/>
            <person name="Quail M.A."/>
            <person name="Kieser H."/>
            <person name="Harper D."/>
            <person name="Bateman A."/>
            <person name="Brown S."/>
            <person name="Chandra G."/>
            <person name="Chen C.W."/>
            <person name="Collins M."/>
            <person name="Cronin A."/>
            <person name="Fraser A."/>
            <person name="Goble A."/>
            <person name="Hidalgo J."/>
            <person name="Hornsby T."/>
            <person name="Howarth S."/>
            <person name="Huang C.-H."/>
            <person name="Kieser T."/>
            <person name="Larke L."/>
            <person name="Murphy L.D."/>
            <person name="Oliver K."/>
            <person name="O'Neil S."/>
            <person name="Rabbinowitsch E."/>
            <person name="Rajandream M.A."/>
            <person name="Rutherford K.M."/>
            <person name="Rutter S."/>
            <person name="Seeger K."/>
            <person name="Saunders D."/>
            <person name="Sharp S."/>
            <person name="Squares R."/>
            <person name="Squares S."/>
            <person name="Taylor K."/>
            <person name="Warren T."/>
            <person name="Wietzorrek A."/>
            <person name="Woodward J.R."/>
            <person name="Barrell B.G."/>
            <person name="Parkhill J."/>
            <person name="Hopwood D.A."/>
        </authorList>
    </citation>
    <scope>NUCLEOTIDE SEQUENCE [LARGE SCALE GENOMIC DNA]</scope>
    <source>
        <strain>ATCC BAA-471 / A3(2) / M145</strain>
    </source>
</reference>
<reference key="2">
    <citation type="journal article" date="2018" name="Microbes Environ.">
        <title>NgcESco acts as a lower-affinity binding protein of an ABC transporter for the uptake of N,N'-diacetylchitobiose in Streptomyces coelicolor A3(2).</title>
        <authorList>
            <person name="Iinuma C."/>
            <person name="Saito A."/>
            <person name="Ohnuma T."/>
            <person name="Tenconi E."/>
            <person name="Rosu A."/>
            <person name="Colson S."/>
            <person name="Mizutani Y."/>
            <person name="Liu F."/>
            <person name="Swiatek-Polatynska M."/>
            <person name="van Wezel G.P."/>
            <person name="Rigali S."/>
            <person name="Fujii T."/>
            <person name="Miyashita K."/>
        </authorList>
    </citation>
    <scope>FUNCTION</scope>
    <scope>SUBUNIT</scope>
    <scope>INDUCTION</scope>
    <source>
        <strain>ATCC BAA-471 / A3(2) / M145</strain>
    </source>
</reference>
<proteinExistence type="evidence at protein level"/>
<keyword id="KW-1003">Cell membrane</keyword>
<keyword id="KW-0472">Membrane</keyword>
<keyword id="KW-1185">Reference proteome</keyword>
<keyword id="KW-0762">Sugar transport</keyword>
<keyword id="KW-0812">Transmembrane</keyword>
<keyword id="KW-1133">Transmembrane helix</keyword>
<keyword id="KW-0813">Transport</keyword>